<comment type="function">
    <text evidence="1">mRNA decapping enzyme that specifically removes the nicotinamide adenine dinucleotide (NAD) cap from a subset of mRNAs by hydrolyzing the diphosphate linkage to produce nicotinamide mononucleotide (NMN) and 5' monophosphate mRNA. The NAD-cap is present at the 5'-end of some mRNAs and stabilizes RNA against 5'-processing. Has preference for mRNAs with a 5'-end purine. Catalyzes the hydrolysis of a broad range of dinucleotide pyrophosphates.</text>
</comment>
<comment type="catalytic activity">
    <reaction evidence="1">
        <text>a 5'-end NAD(+)-phospho-ribonucleoside in mRNA + H2O = a 5'-end phospho-adenosine-phospho-ribonucleoside in mRNA + beta-nicotinamide D-ribonucleotide + 2 H(+)</text>
        <dbReference type="Rhea" id="RHEA:60876"/>
        <dbReference type="Rhea" id="RHEA-COMP:15698"/>
        <dbReference type="Rhea" id="RHEA-COMP:15719"/>
        <dbReference type="ChEBI" id="CHEBI:14649"/>
        <dbReference type="ChEBI" id="CHEBI:15377"/>
        <dbReference type="ChEBI" id="CHEBI:15378"/>
        <dbReference type="ChEBI" id="CHEBI:144029"/>
        <dbReference type="ChEBI" id="CHEBI:144051"/>
    </reaction>
    <physiologicalReaction direction="left-to-right" evidence="1">
        <dbReference type="Rhea" id="RHEA:60877"/>
    </physiologicalReaction>
</comment>
<comment type="catalytic activity">
    <reaction evidence="1">
        <text>NAD(+) + H2O = beta-nicotinamide D-ribonucleotide + AMP + 2 H(+)</text>
        <dbReference type="Rhea" id="RHEA:11800"/>
        <dbReference type="ChEBI" id="CHEBI:14649"/>
        <dbReference type="ChEBI" id="CHEBI:15377"/>
        <dbReference type="ChEBI" id="CHEBI:15378"/>
        <dbReference type="ChEBI" id="CHEBI:57540"/>
        <dbReference type="ChEBI" id="CHEBI:456215"/>
        <dbReference type="EC" id="3.6.1.22"/>
    </reaction>
</comment>
<comment type="catalytic activity">
    <reaction evidence="1">
        <text>NADH + H2O = reduced beta-nicotinamide D-ribonucleotide + AMP + 2 H(+)</text>
        <dbReference type="Rhea" id="RHEA:48868"/>
        <dbReference type="ChEBI" id="CHEBI:15377"/>
        <dbReference type="ChEBI" id="CHEBI:15378"/>
        <dbReference type="ChEBI" id="CHEBI:57945"/>
        <dbReference type="ChEBI" id="CHEBI:90832"/>
        <dbReference type="ChEBI" id="CHEBI:456215"/>
        <dbReference type="EC" id="3.6.1.22"/>
    </reaction>
</comment>
<comment type="cofactor">
    <cofactor evidence="1">
        <name>Mg(2+)</name>
        <dbReference type="ChEBI" id="CHEBI:18420"/>
    </cofactor>
    <cofactor evidence="1">
        <name>Mn(2+)</name>
        <dbReference type="ChEBI" id="CHEBI:29035"/>
    </cofactor>
    <text evidence="1">Divalent metal cations. Mg(2+) or Mn(2+).</text>
</comment>
<comment type="cofactor">
    <cofactor evidence="1">
        <name>Zn(2+)</name>
        <dbReference type="ChEBI" id="CHEBI:29105"/>
    </cofactor>
    <text evidence="1">Binds 1 zinc ion per subunit.</text>
</comment>
<comment type="subunit">
    <text evidence="1">Homodimer.</text>
</comment>
<comment type="similarity">
    <text evidence="1">Belongs to the Nudix hydrolase family. NudC subfamily.</text>
</comment>
<accession>B4TCT5</accession>
<reference key="1">
    <citation type="journal article" date="2011" name="J. Bacteriol.">
        <title>Comparative genomics of 28 Salmonella enterica isolates: evidence for CRISPR-mediated adaptive sublineage evolution.</title>
        <authorList>
            <person name="Fricke W.F."/>
            <person name="Mammel M.K."/>
            <person name="McDermott P.F."/>
            <person name="Tartera C."/>
            <person name="White D.G."/>
            <person name="Leclerc J.E."/>
            <person name="Ravel J."/>
            <person name="Cebula T.A."/>
        </authorList>
    </citation>
    <scope>NUCLEOTIDE SEQUENCE [LARGE SCALE GENOMIC DNA]</scope>
    <source>
        <strain>SL476</strain>
    </source>
</reference>
<name>NUDC_SALHS</name>
<organism>
    <name type="scientific">Salmonella heidelberg (strain SL476)</name>
    <dbReference type="NCBI Taxonomy" id="454169"/>
    <lineage>
        <taxon>Bacteria</taxon>
        <taxon>Pseudomonadati</taxon>
        <taxon>Pseudomonadota</taxon>
        <taxon>Gammaproteobacteria</taxon>
        <taxon>Enterobacterales</taxon>
        <taxon>Enterobacteriaceae</taxon>
        <taxon>Salmonella</taxon>
    </lineage>
</organism>
<dbReference type="EC" id="3.6.1.-" evidence="1"/>
<dbReference type="EC" id="3.6.1.22" evidence="1"/>
<dbReference type="EMBL" id="CP001120">
    <property type="protein sequence ID" value="ACF66801.1"/>
    <property type="molecule type" value="Genomic_DNA"/>
</dbReference>
<dbReference type="RefSeq" id="WP_000373960.1">
    <property type="nucleotide sequence ID" value="NC_011083.1"/>
</dbReference>
<dbReference type="SMR" id="B4TCT5"/>
<dbReference type="KEGG" id="seh:SeHA_C4497"/>
<dbReference type="HOGENOM" id="CLU_037162_0_1_6"/>
<dbReference type="Proteomes" id="UP000001866">
    <property type="component" value="Chromosome"/>
</dbReference>
<dbReference type="GO" id="GO:0005829">
    <property type="term" value="C:cytosol"/>
    <property type="evidence" value="ECO:0007669"/>
    <property type="project" value="TreeGrafter"/>
</dbReference>
<dbReference type="GO" id="GO:0000287">
    <property type="term" value="F:magnesium ion binding"/>
    <property type="evidence" value="ECO:0007669"/>
    <property type="project" value="UniProtKB-UniRule"/>
</dbReference>
<dbReference type="GO" id="GO:0030145">
    <property type="term" value="F:manganese ion binding"/>
    <property type="evidence" value="ECO:0007669"/>
    <property type="project" value="UniProtKB-UniRule"/>
</dbReference>
<dbReference type="GO" id="GO:0000210">
    <property type="term" value="F:NAD+ diphosphatase activity"/>
    <property type="evidence" value="ECO:0007669"/>
    <property type="project" value="UniProtKB-UniRule"/>
</dbReference>
<dbReference type="GO" id="GO:0035529">
    <property type="term" value="F:NADH pyrophosphatase activity"/>
    <property type="evidence" value="ECO:0007669"/>
    <property type="project" value="TreeGrafter"/>
</dbReference>
<dbReference type="GO" id="GO:0110153">
    <property type="term" value="F:RNA NAD-cap (NMN-forming) hydrolase activity"/>
    <property type="evidence" value="ECO:0007669"/>
    <property type="project" value="RHEA"/>
</dbReference>
<dbReference type="GO" id="GO:0008270">
    <property type="term" value="F:zinc ion binding"/>
    <property type="evidence" value="ECO:0007669"/>
    <property type="project" value="UniProtKB-UniRule"/>
</dbReference>
<dbReference type="GO" id="GO:0019677">
    <property type="term" value="P:NAD catabolic process"/>
    <property type="evidence" value="ECO:0007669"/>
    <property type="project" value="TreeGrafter"/>
</dbReference>
<dbReference type="GO" id="GO:0006734">
    <property type="term" value="P:NADH metabolic process"/>
    <property type="evidence" value="ECO:0007669"/>
    <property type="project" value="TreeGrafter"/>
</dbReference>
<dbReference type="GO" id="GO:0006742">
    <property type="term" value="P:NADP catabolic process"/>
    <property type="evidence" value="ECO:0007669"/>
    <property type="project" value="TreeGrafter"/>
</dbReference>
<dbReference type="CDD" id="cd03429">
    <property type="entry name" value="NUDIX_NADH_pyrophosphatase_Nudt13"/>
    <property type="match status" value="1"/>
</dbReference>
<dbReference type="FunFam" id="3.90.79.10:FF:000004">
    <property type="entry name" value="NADH pyrophosphatase"/>
    <property type="match status" value="1"/>
</dbReference>
<dbReference type="FunFam" id="3.90.79.20:FF:000001">
    <property type="entry name" value="NADH pyrophosphatase"/>
    <property type="match status" value="1"/>
</dbReference>
<dbReference type="Gene3D" id="3.90.79.20">
    <property type="match status" value="1"/>
</dbReference>
<dbReference type="Gene3D" id="3.90.79.10">
    <property type="entry name" value="Nucleoside Triphosphate Pyrophosphohydrolase"/>
    <property type="match status" value="1"/>
</dbReference>
<dbReference type="HAMAP" id="MF_00297">
    <property type="entry name" value="Nudix_NudC"/>
    <property type="match status" value="1"/>
</dbReference>
<dbReference type="InterPro" id="IPR050241">
    <property type="entry name" value="NAD-cap_RNA_hydrolase_NudC"/>
</dbReference>
<dbReference type="InterPro" id="IPR049734">
    <property type="entry name" value="NudC-like_C"/>
</dbReference>
<dbReference type="InterPro" id="IPR015797">
    <property type="entry name" value="NUDIX_hydrolase-like_dom_sf"/>
</dbReference>
<dbReference type="InterPro" id="IPR020084">
    <property type="entry name" value="NUDIX_hydrolase_CS"/>
</dbReference>
<dbReference type="InterPro" id="IPR000086">
    <property type="entry name" value="NUDIX_hydrolase_dom"/>
</dbReference>
<dbReference type="InterPro" id="IPR022925">
    <property type="entry name" value="RNA_Hydrolase_NudC"/>
</dbReference>
<dbReference type="InterPro" id="IPR015376">
    <property type="entry name" value="Znr_NADH_PPase"/>
</dbReference>
<dbReference type="NCBIfam" id="NF001299">
    <property type="entry name" value="PRK00241.1"/>
    <property type="match status" value="1"/>
</dbReference>
<dbReference type="PANTHER" id="PTHR42904:SF6">
    <property type="entry name" value="NAD-CAPPED RNA HYDROLASE NUDT12"/>
    <property type="match status" value="1"/>
</dbReference>
<dbReference type="PANTHER" id="PTHR42904">
    <property type="entry name" value="NUDIX HYDROLASE, NUDC SUBFAMILY"/>
    <property type="match status" value="1"/>
</dbReference>
<dbReference type="Pfam" id="PF00293">
    <property type="entry name" value="NUDIX"/>
    <property type="match status" value="1"/>
</dbReference>
<dbReference type="Pfam" id="PF09297">
    <property type="entry name" value="Zn_ribbon_NUD"/>
    <property type="match status" value="1"/>
</dbReference>
<dbReference type="SUPFAM" id="SSF55811">
    <property type="entry name" value="Nudix"/>
    <property type="match status" value="2"/>
</dbReference>
<dbReference type="PROSITE" id="PS51462">
    <property type="entry name" value="NUDIX"/>
    <property type="match status" value="1"/>
</dbReference>
<dbReference type="PROSITE" id="PS00893">
    <property type="entry name" value="NUDIX_BOX"/>
    <property type="match status" value="1"/>
</dbReference>
<evidence type="ECO:0000255" key="1">
    <source>
        <dbReference type="HAMAP-Rule" id="MF_00297"/>
    </source>
</evidence>
<gene>
    <name evidence="1" type="primary">nudC</name>
    <name type="ordered locus">SeHA_C4497</name>
</gene>
<protein>
    <recommendedName>
        <fullName evidence="1">NAD-capped RNA hydrolase NudC</fullName>
        <shortName evidence="1">DeNADding enzyme NudC</shortName>
        <ecNumber evidence="1">3.6.1.-</ecNumber>
    </recommendedName>
    <alternativeName>
        <fullName evidence="1">NADH pyrophosphatase</fullName>
        <ecNumber evidence="1">3.6.1.22</ecNumber>
    </alternativeName>
</protein>
<keyword id="KW-0378">Hydrolase</keyword>
<keyword id="KW-0460">Magnesium</keyword>
<keyword id="KW-0464">Manganese</keyword>
<keyword id="KW-0479">Metal-binding</keyword>
<keyword id="KW-0520">NAD</keyword>
<keyword id="KW-0862">Zinc</keyword>
<sequence length="257" mass="29635">MDRIIEKLESGWWIVSHEQKLWLPYGELPHGLAANFDLVGQRALRIGEWQGEPVWLVLQHRRHDMGSVRQVIDQDAGLFQLAGRGVQLAEFYRSHKFCGYCGHPMHPSKTEWAMLCSHCRERYYPQIAPCIIVAIRREDSILLARHVRHRNGVHTVLAGFVEVGETLEQAVAREVMEESGIKVKNLRYVTSQPWPFPQSLMTAFMAEYDSGEIVIDPKELLEANWYRYDDLPLLPPPGTVARRLIEDTVAMCRAEYD</sequence>
<feature type="chain" id="PRO_1000115250" description="NAD-capped RNA hydrolase NudC">
    <location>
        <begin position="1"/>
        <end position="257"/>
    </location>
</feature>
<feature type="domain" description="Nudix hydrolase" evidence="1">
    <location>
        <begin position="125"/>
        <end position="248"/>
    </location>
</feature>
<feature type="short sequence motif" description="Nudix box" evidence="1">
    <location>
        <begin position="159"/>
        <end position="180"/>
    </location>
</feature>
<feature type="binding site" evidence="1">
    <location>
        <position position="69"/>
    </location>
    <ligand>
        <name>substrate</name>
    </ligand>
</feature>
<feature type="binding site" evidence="1">
    <location>
        <position position="98"/>
    </location>
    <ligand>
        <name>Zn(2+)</name>
        <dbReference type="ChEBI" id="CHEBI:29105"/>
    </ligand>
</feature>
<feature type="binding site" evidence="1">
    <location>
        <position position="101"/>
    </location>
    <ligand>
        <name>Zn(2+)</name>
        <dbReference type="ChEBI" id="CHEBI:29105"/>
    </ligand>
</feature>
<feature type="binding site" evidence="1">
    <location>
        <position position="111"/>
    </location>
    <ligand>
        <name>substrate</name>
    </ligand>
</feature>
<feature type="binding site" evidence="1">
    <location>
        <position position="116"/>
    </location>
    <ligand>
        <name>Zn(2+)</name>
        <dbReference type="ChEBI" id="CHEBI:29105"/>
    </ligand>
</feature>
<feature type="binding site" evidence="1">
    <location>
        <position position="119"/>
    </location>
    <ligand>
        <name>Zn(2+)</name>
        <dbReference type="ChEBI" id="CHEBI:29105"/>
    </ligand>
</feature>
<feature type="binding site" evidence="1">
    <location>
        <position position="124"/>
    </location>
    <ligand>
        <name>substrate</name>
    </ligand>
</feature>
<feature type="binding site" evidence="1">
    <location>
        <position position="158"/>
    </location>
    <ligand>
        <name>a divalent metal cation</name>
        <dbReference type="ChEBI" id="CHEBI:60240"/>
        <label>1</label>
    </ligand>
</feature>
<feature type="binding site" evidence="1">
    <location>
        <position position="174"/>
    </location>
    <ligand>
        <name>a divalent metal cation</name>
        <dbReference type="ChEBI" id="CHEBI:60240"/>
        <label>2</label>
    </ligand>
</feature>
<feature type="binding site" evidence="1">
    <location>
        <position position="174"/>
    </location>
    <ligand>
        <name>a divalent metal cation</name>
        <dbReference type="ChEBI" id="CHEBI:60240"/>
        <label>3</label>
    </ligand>
</feature>
<feature type="binding site" evidence="1">
    <location>
        <position position="178"/>
    </location>
    <ligand>
        <name>a divalent metal cation</name>
        <dbReference type="ChEBI" id="CHEBI:60240"/>
        <label>1</label>
    </ligand>
</feature>
<feature type="binding site" evidence="1">
    <location>
        <position position="178"/>
    </location>
    <ligand>
        <name>a divalent metal cation</name>
        <dbReference type="ChEBI" id="CHEBI:60240"/>
        <label>3</label>
    </ligand>
</feature>
<feature type="binding site" evidence="1">
    <location>
        <begin position="192"/>
        <end position="199"/>
    </location>
    <ligand>
        <name>substrate</name>
    </ligand>
</feature>
<feature type="binding site" evidence="1">
    <location>
        <position position="219"/>
    </location>
    <ligand>
        <name>a divalent metal cation</name>
        <dbReference type="ChEBI" id="CHEBI:60240"/>
        <label>1</label>
    </ligand>
</feature>
<feature type="binding site" evidence="1">
    <location>
        <position position="219"/>
    </location>
    <ligand>
        <name>a divalent metal cation</name>
        <dbReference type="ChEBI" id="CHEBI:60240"/>
        <label>3</label>
    </ligand>
</feature>
<feature type="binding site" evidence="1">
    <location>
        <position position="241"/>
    </location>
    <ligand>
        <name>substrate</name>
    </ligand>
</feature>
<proteinExistence type="inferred from homology"/>